<dbReference type="EMBL" id="CP001472">
    <property type="protein sequence ID" value="ACO34626.1"/>
    <property type="molecule type" value="Genomic_DNA"/>
</dbReference>
<dbReference type="RefSeq" id="WP_015896569.1">
    <property type="nucleotide sequence ID" value="NC_012483.1"/>
</dbReference>
<dbReference type="SMR" id="C1F627"/>
<dbReference type="FunCoup" id="C1F627">
    <property type="interactions" value="623"/>
</dbReference>
<dbReference type="STRING" id="240015.ACP_1436"/>
<dbReference type="KEGG" id="aca:ACP_1436"/>
<dbReference type="eggNOG" id="COG0097">
    <property type="taxonomic scope" value="Bacteria"/>
</dbReference>
<dbReference type="HOGENOM" id="CLU_065464_1_2_0"/>
<dbReference type="InParanoid" id="C1F627"/>
<dbReference type="OrthoDB" id="9805007at2"/>
<dbReference type="Proteomes" id="UP000002207">
    <property type="component" value="Chromosome"/>
</dbReference>
<dbReference type="GO" id="GO:0022625">
    <property type="term" value="C:cytosolic large ribosomal subunit"/>
    <property type="evidence" value="ECO:0007669"/>
    <property type="project" value="TreeGrafter"/>
</dbReference>
<dbReference type="GO" id="GO:0019843">
    <property type="term" value="F:rRNA binding"/>
    <property type="evidence" value="ECO:0007669"/>
    <property type="project" value="UniProtKB-UniRule"/>
</dbReference>
<dbReference type="GO" id="GO:0003735">
    <property type="term" value="F:structural constituent of ribosome"/>
    <property type="evidence" value="ECO:0007669"/>
    <property type="project" value="InterPro"/>
</dbReference>
<dbReference type="GO" id="GO:0002181">
    <property type="term" value="P:cytoplasmic translation"/>
    <property type="evidence" value="ECO:0007669"/>
    <property type="project" value="TreeGrafter"/>
</dbReference>
<dbReference type="FunFam" id="3.90.930.12:FF:000001">
    <property type="entry name" value="50S ribosomal protein L6"/>
    <property type="match status" value="1"/>
</dbReference>
<dbReference type="Gene3D" id="3.90.930.12">
    <property type="entry name" value="Ribosomal protein L6, alpha-beta domain"/>
    <property type="match status" value="2"/>
</dbReference>
<dbReference type="HAMAP" id="MF_01365_B">
    <property type="entry name" value="Ribosomal_uL6_B"/>
    <property type="match status" value="1"/>
</dbReference>
<dbReference type="InterPro" id="IPR000702">
    <property type="entry name" value="Ribosomal_uL6-like"/>
</dbReference>
<dbReference type="InterPro" id="IPR036789">
    <property type="entry name" value="Ribosomal_uL6-like_a/b-dom_sf"/>
</dbReference>
<dbReference type="InterPro" id="IPR020040">
    <property type="entry name" value="Ribosomal_uL6_a/b-dom"/>
</dbReference>
<dbReference type="InterPro" id="IPR019906">
    <property type="entry name" value="Ribosomal_uL6_bac-type"/>
</dbReference>
<dbReference type="NCBIfam" id="TIGR03654">
    <property type="entry name" value="L6_bact"/>
    <property type="match status" value="1"/>
</dbReference>
<dbReference type="PANTHER" id="PTHR11655">
    <property type="entry name" value="60S/50S RIBOSOMAL PROTEIN L6/L9"/>
    <property type="match status" value="1"/>
</dbReference>
<dbReference type="PANTHER" id="PTHR11655:SF14">
    <property type="entry name" value="LARGE RIBOSOMAL SUBUNIT PROTEIN UL6M"/>
    <property type="match status" value="1"/>
</dbReference>
<dbReference type="Pfam" id="PF00347">
    <property type="entry name" value="Ribosomal_L6"/>
    <property type="match status" value="2"/>
</dbReference>
<dbReference type="PIRSF" id="PIRSF002162">
    <property type="entry name" value="Ribosomal_L6"/>
    <property type="match status" value="1"/>
</dbReference>
<dbReference type="PRINTS" id="PR00059">
    <property type="entry name" value="RIBOSOMALL6"/>
</dbReference>
<dbReference type="SUPFAM" id="SSF56053">
    <property type="entry name" value="Ribosomal protein L6"/>
    <property type="match status" value="2"/>
</dbReference>
<feature type="chain" id="PRO_1000166784" description="Large ribosomal subunit protein uL6">
    <location>
        <begin position="1"/>
        <end position="179"/>
    </location>
</feature>
<name>RL6_ACIC5</name>
<keyword id="KW-1185">Reference proteome</keyword>
<keyword id="KW-0687">Ribonucleoprotein</keyword>
<keyword id="KW-0689">Ribosomal protein</keyword>
<keyword id="KW-0694">RNA-binding</keyword>
<keyword id="KW-0699">rRNA-binding</keyword>
<reference key="1">
    <citation type="journal article" date="2009" name="Appl. Environ. Microbiol.">
        <title>Three genomes from the phylum Acidobacteria provide insight into the lifestyles of these microorganisms in soils.</title>
        <authorList>
            <person name="Ward N.L."/>
            <person name="Challacombe J.F."/>
            <person name="Janssen P.H."/>
            <person name="Henrissat B."/>
            <person name="Coutinho P.M."/>
            <person name="Wu M."/>
            <person name="Xie G."/>
            <person name="Haft D.H."/>
            <person name="Sait M."/>
            <person name="Badger J."/>
            <person name="Barabote R.D."/>
            <person name="Bradley B."/>
            <person name="Brettin T.S."/>
            <person name="Brinkac L.M."/>
            <person name="Bruce D."/>
            <person name="Creasy T."/>
            <person name="Daugherty S.C."/>
            <person name="Davidsen T.M."/>
            <person name="DeBoy R.T."/>
            <person name="Detter J.C."/>
            <person name="Dodson R.J."/>
            <person name="Durkin A.S."/>
            <person name="Ganapathy A."/>
            <person name="Gwinn-Giglio M."/>
            <person name="Han C.S."/>
            <person name="Khouri H."/>
            <person name="Kiss H."/>
            <person name="Kothari S.P."/>
            <person name="Madupu R."/>
            <person name="Nelson K.E."/>
            <person name="Nelson W.C."/>
            <person name="Paulsen I."/>
            <person name="Penn K."/>
            <person name="Ren Q."/>
            <person name="Rosovitz M.J."/>
            <person name="Selengut J.D."/>
            <person name="Shrivastava S."/>
            <person name="Sullivan S.A."/>
            <person name="Tapia R."/>
            <person name="Thompson L.S."/>
            <person name="Watkins K.L."/>
            <person name="Yang Q."/>
            <person name="Yu C."/>
            <person name="Zafar N."/>
            <person name="Zhou L."/>
            <person name="Kuske C.R."/>
        </authorList>
    </citation>
    <scope>NUCLEOTIDE SEQUENCE [LARGE SCALE GENOMIC DNA]</scope>
    <source>
        <strain>ATCC 51196 / DSM 11244 / BCRC 80197 / JCM 7670 / NBRC 15755 / NCIMB 13165 / 161</strain>
    </source>
</reference>
<comment type="function">
    <text evidence="1">This protein binds to the 23S rRNA, and is important in its secondary structure. It is located near the subunit interface in the base of the L7/L12 stalk, and near the tRNA binding site of the peptidyltransferase center.</text>
</comment>
<comment type="subunit">
    <text evidence="1">Part of the 50S ribosomal subunit.</text>
</comment>
<comment type="similarity">
    <text evidence="1">Belongs to the universal ribosomal protein uL6 family.</text>
</comment>
<gene>
    <name evidence="1" type="primary">rplF</name>
    <name type="ordered locus">ACP_1436</name>
</gene>
<accession>C1F627</accession>
<proteinExistence type="inferred from homology"/>
<protein>
    <recommendedName>
        <fullName evidence="1">Large ribosomal subunit protein uL6</fullName>
    </recommendedName>
    <alternativeName>
        <fullName evidence="2">50S ribosomal protein L6</fullName>
    </alternativeName>
</protein>
<organism>
    <name type="scientific">Acidobacterium capsulatum (strain ATCC 51196 / DSM 11244 / BCRC 80197 / JCM 7670 / NBRC 15755 / NCIMB 13165 / 161)</name>
    <dbReference type="NCBI Taxonomy" id="240015"/>
    <lineage>
        <taxon>Bacteria</taxon>
        <taxon>Pseudomonadati</taxon>
        <taxon>Acidobacteriota</taxon>
        <taxon>Terriglobia</taxon>
        <taxon>Terriglobales</taxon>
        <taxon>Acidobacteriaceae</taxon>
        <taxon>Acidobacterium</taxon>
    </lineage>
</organism>
<evidence type="ECO:0000255" key="1">
    <source>
        <dbReference type="HAMAP-Rule" id="MF_01365"/>
    </source>
</evidence>
<evidence type="ECO:0000305" key="2"/>
<sequence>MSRIGNKPIPLPAGVKYTHAGGKVVVEGPKGKIEQVIPEGIKLETKDGHIHAIRETEKHAAVHGLTRALVFNAVEGVTKGWSKDLDIVGIGYRAELKGKDMVVFTLGYSHPIEFPLPTGITAVIDPKQTRVTVSGIDRQKVGQVAADMRSLRKPDPYKNKGVRYVGEKLKKKAGKAGSK</sequence>